<sequence length="381" mass="42939">MTNIRKNHPLXKIMNESFIDLPAPSNISSWWNFGSLLGVCLVIQILTGLFLAMHYTSDTSTAFSSVTHICRDVNYGWLIRYMHANGASMFFICLFLHVGRGMYYGSYTFMETWNIGIILLFTVMATAFMGYVLPWGQMSFWGATVITNLLSAIPYIGTTLVEWIWGGFSVDKATLTRFFAFHFMLPFIITAMVVVHLLFLHETGSNNPTGIDSDSDKIPFHPYYTIKDFLGIILLLTALMTLVLFFPDILGDPDNYTPANPLSTPAHIKPEWYFLFAYAILRSIPNKLGGVLALIASILILALMPTLHTSKQRGLMFRPISQTLFWILVANLLILTWIGGQPVEYPFITIGQLASISYFTIILILMPTAGIIENNMLKFTH</sequence>
<proteinExistence type="inferred from homology"/>
<geneLocation type="mitochondrion"/>
<gene>
    <name type="primary">MT-CYB</name>
    <name type="synonym">COB</name>
    <name type="synonym">CYTB</name>
    <name type="synonym">MTCYB</name>
</gene>
<reference key="1">
    <citation type="journal article" date="1999" name="J. Mammal. Evol.">
        <title>Phylogenetic relationships and the radiation of sigmodontine rodents in South America: evidence from cytochrome b.</title>
        <authorList>
            <person name="Smith M.F."/>
            <person name="Patton J.L."/>
        </authorList>
    </citation>
    <scope>NUCLEOTIDE SEQUENCE [GENOMIC DNA]</scope>
    <source>
        <strain>Isolate MVZ 147667</strain>
    </source>
</reference>
<accession>Q9XNU4</accession>
<protein>
    <recommendedName>
        <fullName>Cytochrome b</fullName>
    </recommendedName>
    <alternativeName>
        <fullName>Complex III subunit 3</fullName>
    </alternativeName>
    <alternativeName>
        <fullName>Complex III subunit III</fullName>
    </alternativeName>
    <alternativeName>
        <fullName>Cytochrome b-c1 complex subunit 3</fullName>
    </alternativeName>
    <alternativeName>
        <fullName>Ubiquinol-cytochrome-c reductase complex cytochrome b subunit</fullName>
    </alternativeName>
</protein>
<organism>
    <name type="scientific">Neotoma albigula</name>
    <name type="common">White-throated woodrat</name>
    <dbReference type="NCBI Taxonomy" id="42408"/>
    <lineage>
        <taxon>Eukaryota</taxon>
        <taxon>Metazoa</taxon>
        <taxon>Chordata</taxon>
        <taxon>Craniata</taxon>
        <taxon>Vertebrata</taxon>
        <taxon>Euteleostomi</taxon>
        <taxon>Mammalia</taxon>
        <taxon>Eutheria</taxon>
        <taxon>Euarchontoglires</taxon>
        <taxon>Glires</taxon>
        <taxon>Rodentia</taxon>
        <taxon>Myomorpha</taxon>
        <taxon>Muroidea</taxon>
        <taxon>Cricetidae</taxon>
        <taxon>Neotominae</taxon>
        <taxon>Neotoma</taxon>
    </lineage>
</organism>
<dbReference type="EMBL" id="AF108704">
    <property type="protein sequence ID" value="AAD45486.1"/>
    <property type="molecule type" value="Genomic_DNA"/>
</dbReference>
<dbReference type="GO" id="GO:0005743">
    <property type="term" value="C:mitochondrial inner membrane"/>
    <property type="evidence" value="ECO:0007669"/>
    <property type="project" value="UniProtKB-SubCell"/>
</dbReference>
<dbReference type="GO" id="GO:0045275">
    <property type="term" value="C:respiratory chain complex III"/>
    <property type="evidence" value="ECO:0007669"/>
    <property type="project" value="InterPro"/>
</dbReference>
<dbReference type="GO" id="GO:0046872">
    <property type="term" value="F:metal ion binding"/>
    <property type="evidence" value="ECO:0007669"/>
    <property type="project" value="UniProtKB-KW"/>
</dbReference>
<dbReference type="GO" id="GO:0008121">
    <property type="term" value="F:ubiquinol-cytochrome-c reductase activity"/>
    <property type="evidence" value="ECO:0007669"/>
    <property type="project" value="InterPro"/>
</dbReference>
<dbReference type="GO" id="GO:0006122">
    <property type="term" value="P:mitochondrial electron transport, ubiquinol to cytochrome c"/>
    <property type="evidence" value="ECO:0007669"/>
    <property type="project" value="TreeGrafter"/>
</dbReference>
<dbReference type="CDD" id="cd00290">
    <property type="entry name" value="cytochrome_b_C"/>
    <property type="match status" value="1"/>
</dbReference>
<dbReference type="CDD" id="cd00284">
    <property type="entry name" value="Cytochrome_b_N"/>
    <property type="match status" value="1"/>
</dbReference>
<dbReference type="FunFam" id="1.20.810.10:FF:000002">
    <property type="entry name" value="Cytochrome b"/>
    <property type="match status" value="1"/>
</dbReference>
<dbReference type="Gene3D" id="1.20.810.10">
    <property type="entry name" value="Cytochrome Bc1 Complex, Chain C"/>
    <property type="match status" value="1"/>
</dbReference>
<dbReference type="InterPro" id="IPR005798">
    <property type="entry name" value="Cyt_b/b6_C"/>
</dbReference>
<dbReference type="InterPro" id="IPR036150">
    <property type="entry name" value="Cyt_b/b6_C_sf"/>
</dbReference>
<dbReference type="InterPro" id="IPR005797">
    <property type="entry name" value="Cyt_b/b6_N"/>
</dbReference>
<dbReference type="InterPro" id="IPR027387">
    <property type="entry name" value="Cytb/b6-like_sf"/>
</dbReference>
<dbReference type="InterPro" id="IPR030689">
    <property type="entry name" value="Cytochrome_b"/>
</dbReference>
<dbReference type="InterPro" id="IPR048260">
    <property type="entry name" value="Cytochrome_b_C_euk/bac"/>
</dbReference>
<dbReference type="InterPro" id="IPR048259">
    <property type="entry name" value="Cytochrome_b_N_euk/bac"/>
</dbReference>
<dbReference type="InterPro" id="IPR016174">
    <property type="entry name" value="Di-haem_cyt_TM"/>
</dbReference>
<dbReference type="PANTHER" id="PTHR19271">
    <property type="entry name" value="CYTOCHROME B"/>
    <property type="match status" value="1"/>
</dbReference>
<dbReference type="PANTHER" id="PTHR19271:SF16">
    <property type="entry name" value="CYTOCHROME B"/>
    <property type="match status" value="1"/>
</dbReference>
<dbReference type="Pfam" id="PF00032">
    <property type="entry name" value="Cytochrom_B_C"/>
    <property type="match status" value="1"/>
</dbReference>
<dbReference type="Pfam" id="PF00033">
    <property type="entry name" value="Cytochrome_B"/>
    <property type="match status" value="1"/>
</dbReference>
<dbReference type="PIRSF" id="PIRSF038885">
    <property type="entry name" value="COB"/>
    <property type="match status" value="1"/>
</dbReference>
<dbReference type="SUPFAM" id="SSF81648">
    <property type="entry name" value="a domain/subunit of cytochrome bc1 complex (Ubiquinol-cytochrome c reductase)"/>
    <property type="match status" value="1"/>
</dbReference>
<dbReference type="SUPFAM" id="SSF81342">
    <property type="entry name" value="Transmembrane di-heme cytochromes"/>
    <property type="match status" value="1"/>
</dbReference>
<dbReference type="PROSITE" id="PS51003">
    <property type="entry name" value="CYTB_CTER"/>
    <property type="match status" value="1"/>
</dbReference>
<dbReference type="PROSITE" id="PS51002">
    <property type="entry name" value="CYTB_NTER"/>
    <property type="match status" value="1"/>
</dbReference>
<name>CYB_NEOAL</name>
<keyword id="KW-0249">Electron transport</keyword>
<keyword id="KW-0349">Heme</keyword>
<keyword id="KW-0408">Iron</keyword>
<keyword id="KW-0472">Membrane</keyword>
<keyword id="KW-0479">Metal-binding</keyword>
<keyword id="KW-0496">Mitochondrion</keyword>
<keyword id="KW-0999">Mitochondrion inner membrane</keyword>
<keyword id="KW-0679">Respiratory chain</keyword>
<keyword id="KW-0812">Transmembrane</keyword>
<keyword id="KW-1133">Transmembrane helix</keyword>
<keyword id="KW-0813">Transport</keyword>
<keyword id="KW-0830">Ubiquinone</keyword>
<comment type="function">
    <text evidence="2">Component of the ubiquinol-cytochrome c reductase complex (complex III or cytochrome b-c1 complex) that is part of the mitochondrial respiratory chain. The b-c1 complex mediates electron transfer from ubiquinol to cytochrome c. Contributes to the generation of a proton gradient across the mitochondrial membrane that is then used for ATP synthesis.</text>
</comment>
<comment type="cofactor">
    <cofactor evidence="2">
        <name>heme b</name>
        <dbReference type="ChEBI" id="CHEBI:60344"/>
    </cofactor>
    <text evidence="2">Binds 2 heme b groups non-covalently.</text>
</comment>
<comment type="subunit">
    <text evidence="2">The cytochrome bc1 complex contains 11 subunits: 3 respiratory subunits (MT-CYB, CYC1 and UQCRFS1), 2 core proteins (UQCRC1 and UQCRC2) and 6 low-molecular weight proteins (UQCRH/QCR6, UQCRB/QCR7, UQCRQ/QCR8, UQCR10/QCR9, UQCR11/QCR10 and a cleavage product of UQCRFS1). This cytochrome bc1 complex then forms a dimer.</text>
</comment>
<comment type="subcellular location">
    <subcellularLocation>
        <location evidence="2">Mitochondrion inner membrane</location>
        <topology evidence="2">Multi-pass membrane protein</topology>
    </subcellularLocation>
</comment>
<comment type="miscellaneous">
    <text evidence="1">Heme 1 (or BL or b562) is low-potential and absorbs at about 562 nm, and heme 2 (or BH or b566) is high-potential and absorbs at about 566 nm.</text>
</comment>
<comment type="similarity">
    <text evidence="3 4">Belongs to the cytochrome b family.</text>
</comment>
<comment type="caution">
    <text evidence="2">The full-length protein contains only eight transmembrane helices, not nine as predicted by bioinformatics tools.</text>
</comment>
<feature type="chain" id="PRO_0000061268" description="Cytochrome b">
    <location>
        <begin position="1"/>
        <end position="381"/>
    </location>
</feature>
<feature type="transmembrane region" description="Helical" evidence="2">
    <location>
        <begin position="33"/>
        <end position="53"/>
    </location>
</feature>
<feature type="transmembrane region" description="Helical" evidence="2">
    <location>
        <begin position="77"/>
        <end position="98"/>
    </location>
</feature>
<feature type="transmembrane region" description="Helical" evidence="2">
    <location>
        <begin position="113"/>
        <end position="133"/>
    </location>
</feature>
<feature type="transmembrane region" description="Helical" evidence="2">
    <location>
        <begin position="178"/>
        <end position="198"/>
    </location>
</feature>
<feature type="transmembrane region" description="Helical" evidence="2">
    <location>
        <begin position="226"/>
        <end position="246"/>
    </location>
</feature>
<feature type="transmembrane region" description="Helical" evidence="2">
    <location>
        <begin position="288"/>
        <end position="308"/>
    </location>
</feature>
<feature type="transmembrane region" description="Helical" evidence="2">
    <location>
        <begin position="320"/>
        <end position="340"/>
    </location>
</feature>
<feature type="transmembrane region" description="Helical" evidence="2">
    <location>
        <begin position="347"/>
        <end position="367"/>
    </location>
</feature>
<feature type="binding site" description="axial binding residue" evidence="2">
    <location>
        <position position="83"/>
    </location>
    <ligand>
        <name>heme b</name>
        <dbReference type="ChEBI" id="CHEBI:60344"/>
        <label>b562</label>
    </ligand>
    <ligandPart>
        <name>Fe</name>
        <dbReference type="ChEBI" id="CHEBI:18248"/>
    </ligandPart>
</feature>
<feature type="binding site" description="axial binding residue" evidence="2">
    <location>
        <position position="97"/>
    </location>
    <ligand>
        <name>heme b</name>
        <dbReference type="ChEBI" id="CHEBI:60344"/>
        <label>b566</label>
    </ligand>
    <ligandPart>
        <name>Fe</name>
        <dbReference type="ChEBI" id="CHEBI:18248"/>
    </ligandPart>
</feature>
<feature type="binding site" description="axial binding residue" evidence="2">
    <location>
        <position position="182"/>
    </location>
    <ligand>
        <name>heme b</name>
        <dbReference type="ChEBI" id="CHEBI:60344"/>
        <label>b562</label>
    </ligand>
    <ligandPart>
        <name>Fe</name>
        <dbReference type="ChEBI" id="CHEBI:18248"/>
    </ligandPart>
</feature>
<feature type="binding site" description="axial binding residue" evidence="2">
    <location>
        <position position="196"/>
    </location>
    <ligand>
        <name>heme b</name>
        <dbReference type="ChEBI" id="CHEBI:60344"/>
        <label>b566</label>
    </ligand>
    <ligandPart>
        <name>Fe</name>
        <dbReference type="ChEBI" id="CHEBI:18248"/>
    </ligandPart>
</feature>
<feature type="binding site" evidence="2">
    <location>
        <position position="201"/>
    </location>
    <ligand>
        <name>a ubiquinone</name>
        <dbReference type="ChEBI" id="CHEBI:16389"/>
    </ligand>
</feature>
<evidence type="ECO:0000250" key="1"/>
<evidence type="ECO:0000250" key="2">
    <source>
        <dbReference type="UniProtKB" id="P00157"/>
    </source>
</evidence>
<evidence type="ECO:0000255" key="3">
    <source>
        <dbReference type="PROSITE-ProRule" id="PRU00967"/>
    </source>
</evidence>
<evidence type="ECO:0000255" key="4">
    <source>
        <dbReference type="PROSITE-ProRule" id="PRU00968"/>
    </source>
</evidence>